<proteinExistence type="inferred from homology"/>
<organism>
    <name type="scientific">Nitratidesulfovibrio vulgaris (strain ATCC 29579 / DSM 644 / CCUG 34227 / NCIMB 8303 / VKM B-1760 / Hildenborough)</name>
    <name type="common">Desulfovibrio vulgaris</name>
    <dbReference type="NCBI Taxonomy" id="882"/>
    <lineage>
        <taxon>Bacteria</taxon>
        <taxon>Pseudomonadati</taxon>
        <taxon>Thermodesulfobacteriota</taxon>
        <taxon>Desulfovibrionia</taxon>
        <taxon>Desulfovibrionales</taxon>
        <taxon>Desulfovibrionaceae</taxon>
        <taxon>Nitratidesulfovibrio</taxon>
    </lineage>
</organism>
<sequence>MSANIGKIVQVIGAVVDVEFPSGQLPNILNALDIKNPNNTDAPDLVCEVAQHLGDNIVRTIAMDATEGLVRGMEASDTGKPIMVPVGKASLGRIMNVVGRPVDELGPINADKSLPIHRAAPEFTEQNTKVELLETGIKVVDLLIPFPKGGKMGLFGGAGVGKTVILMEMINNIAKQHGGISVFAGVGERTREGNDLYHEMKDAGVLEKAALIYGQMNEPPGARARVALTALACAEYFRDVENQDVLLFVDNIFRFTQAGSEVSALLGRMPSAVGYQPTLGTDLGALQERITSTTKGSITSVQAVYVPADDLTDPAPATTFSHLDGTLVLSRQIAELGIYPAVDPLDSTSRILDPNVVGVEHYGVARQVQQVLQKYKDLQDIIAILGMDELSDEDKLTVARARRIQRFLSQPFHVAETFTGTPGVYVKLEDTIKGFMGILNGDYDHLAEGDFYMVGGIEMALEKYKKRQEQ</sequence>
<dbReference type="EC" id="7.1.2.2" evidence="1"/>
<dbReference type="EMBL" id="AE017285">
    <property type="protein sequence ID" value="AAS95255.1"/>
    <property type="molecule type" value="Genomic_DNA"/>
</dbReference>
<dbReference type="RefSeq" id="WP_010938076.1">
    <property type="nucleotide sequence ID" value="NC_002937.3"/>
</dbReference>
<dbReference type="RefSeq" id="YP_009996.1">
    <property type="nucleotide sequence ID" value="NC_002937.3"/>
</dbReference>
<dbReference type="SMR" id="Q72E04"/>
<dbReference type="IntAct" id="Q72E04">
    <property type="interactions" value="4"/>
</dbReference>
<dbReference type="STRING" id="882.DVU_0775"/>
<dbReference type="PaxDb" id="882-DVU_0775"/>
<dbReference type="EnsemblBacteria" id="AAS95255">
    <property type="protein sequence ID" value="AAS95255"/>
    <property type="gene ID" value="DVU_0775"/>
</dbReference>
<dbReference type="KEGG" id="dvu:DVU_0775"/>
<dbReference type="PATRIC" id="fig|882.5.peg.730"/>
<dbReference type="eggNOG" id="COG0055">
    <property type="taxonomic scope" value="Bacteria"/>
</dbReference>
<dbReference type="HOGENOM" id="CLU_022398_0_2_7"/>
<dbReference type="OrthoDB" id="9801639at2"/>
<dbReference type="PhylomeDB" id="Q72E04"/>
<dbReference type="Proteomes" id="UP000002194">
    <property type="component" value="Chromosome"/>
</dbReference>
<dbReference type="GO" id="GO:0005886">
    <property type="term" value="C:plasma membrane"/>
    <property type="evidence" value="ECO:0007669"/>
    <property type="project" value="UniProtKB-SubCell"/>
</dbReference>
<dbReference type="GO" id="GO:0045259">
    <property type="term" value="C:proton-transporting ATP synthase complex"/>
    <property type="evidence" value="ECO:0007669"/>
    <property type="project" value="UniProtKB-KW"/>
</dbReference>
<dbReference type="GO" id="GO:0005524">
    <property type="term" value="F:ATP binding"/>
    <property type="evidence" value="ECO:0007669"/>
    <property type="project" value="UniProtKB-UniRule"/>
</dbReference>
<dbReference type="GO" id="GO:0016887">
    <property type="term" value="F:ATP hydrolysis activity"/>
    <property type="evidence" value="ECO:0007669"/>
    <property type="project" value="InterPro"/>
</dbReference>
<dbReference type="GO" id="GO:0046933">
    <property type="term" value="F:proton-transporting ATP synthase activity, rotational mechanism"/>
    <property type="evidence" value="ECO:0007669"/>
    <property type="project" value="UniProtKB-UniRule"/>
</dbReference>
<dbReference type="CDD" id="cd18110">
    <property type="entry name" value="ATP-synt_F1_beta_C"/>
    <property type="match status" value="1"/>
</dbReference>
<dbReference type="CDD" id="cd18115">
    <property type="entry name" value="ATP-synt_F1_beta_N"/>
    <property type="match status" value="1"/>
</dbReference>
<dbReference type="CDD" id="cd01133">
    <property type="entry name" value="F1-ATPase_beta_CD"/>
    <property type="match status" value="1"/>
</dbReference>
<dbReference type="FunFam" id="1.10.1140.10:FF:000001">
    <property type="entry name" value="ATP synthase subunit beta"/>
    <property type="match status" value="1"/>
</dbReference>
<dbReference type="FunFam" id="2.40.10.170:FF:000005">
    <property type="entry name" value="ATP synthase subunit beta"/>
    <property type="match status" value="1"/>
</dbReference>
<dbReference type="FunFam" id="3.40.50.300:FF:000026">
    <property type="entry name" value="ATP synthase subunit beta"/>
    <property type="match status" value="1"/>
</dbReference>
<dbReference type="Gene3D" id="2.40.10.170">
    <property type="match status" value="1"/>
</dbReference>
<dbReference type="Gene3D" id="1.10.1140.10">
    <property type="entry name" value="Bovine Mitochondrial F1-atpase, Atp Synthase Beta Chain, Chain D, domain 3"/>
    <property type="match status" value="1"/>
</dbReference>
<dbReference type="Gene3D" id="3.40.50.300">
    <property type="entry name" value="P-loop containing nucleotide triphosphate hydrolases"/>
    <property type="match status" value="1"/>
</dbReference>
<dbReference type="HAMAP" id="MF_01347">
    <property type="entry name" value="ATP_synth_beta_bact"/>
    <property type="match status" value="1"/>
</dbReference>
<dbReference type="InterPro" id="IPR003593">
    <property type="entry name" value="AAA+_ATPase"/>
</dbReference>
<dbReference type="InterPro" id="IPR055190">
    <property type="entry name" value="ATP-synt_VA_C"/>
</dbReference>
<dbReference type="InterPro" id="IPR005722">
    <property type="entry name" value="ATP_synth_F1_bsu"/>
</dbReference>
<dbReference type="InterPro" id="IPR020003">
    <property type="entry name" value="ATPase_a/bsu_AS"/>
</dbReference>
<dbReference type="InterPro" id="IPR050053">
    <property type="entry name" value="ATPase_alpha/beta_chains"/>
</dbReference>
<dbReference type="InterPro" id="IPR004100">
    <property type="entry name" value="ATPase_F1/V1/A1_a/bsu_N"/>
</dbReference>
<dbReference type="InterPro" id="IPR036121">
    <property type="entry name" value="ATPase_F1/V1/A1_a/bsu_N_sf"/>
</dbReference>
<dbReference type="InterPro" id="IPR000194">
    <property type="entry name" value="ATPase_F1/V1/A1_a/bsu_nucl-bd"/>
</dbReference>
<dbReference type="InterPro" id="IPR024034">
    <property type="entry name" value="ATPase_F1/V1_b/a_C"/>
</dbReference>
<dbReference type="InterPro" id="IPR027417">
    <property type="entry name" value="P-loop_NTPase"/>
</dbReference>
<dbReference type="NCBIfam" id="TIGR01039">
    <property type="entry name" value="atpD"/>
    <property type="match status" value="1"/>
</dbReference>
<dbReference type="PANTHER" id="PTHR15184">
    <property type="entry name" value="ATP SYNTHASE"/>
    <property type="match status" value="1"/>
</dbReference>
<dbReference type="PANTHER" id="PTHR15184:SF71">
    <property type="entry name" value="ATP SYNTHASE SUBUNIT BETA, MITOCHONDRIAL"/>
    <property type="match status" value="1"/>
</dbReference>
<dbReference type="Pfam" id="PF00006">
    <property type="entry name" value="ATP-synt_ab"/>
    <property type="match status" value="1"/>
</dbReference>
<dbReference type="Pfam" id="PF02874">
    <property type="entry name" value="ATP-synt_ab_N"/>
    <property type="match status" value="1"/>
</dbReference>
<dbReference type="Pfam" id="PF22919">
    <property type="entry name" value="ATP-synt_VA_C"/>
    <property type="match status" value="1"/>
</dbReference>
<dbReference type="PIRSF" id="PIRSF039072">
    <property type="entry name" value="ATPase_subunit_beta"/>
    <property type="match status" value="1"/>
</dbReference>
<dbReference type="SMART" id="SM00382">
    <property type="entry name" value="AAA"/>
    <property type="match status" value="1"/>
</dbReference>
<dbReference type="SUPFAM" id="SSF47917">
    <property type="entry name" value="C-terminal domain of alpha and beta subunits of F1 ATP synthase"/>
    <property type="match status" value="1"/>
</dbReference>
<dbReference type="SUPFAM" id="SSF50615">
    <property type="entry name" value="N-terminal domain of alpha and beta subunits of F1 ATP synthase"/>
    <property type="match status" value="1"/>
</dbReference>
<dbReference type="SUPFAM" id="SSF52540">
    <property type="entry name" value="P-loop containing nucleoside triphosphate hydrolases"/>
    <property type="match status" value="1"/>
</dbReference>
<dbReference type="PROSITE" id="PS00152">
    <property type="entry name" value="ATPASE_ALPHA_BETA"/>
    <property type="match status" value="1"/>
</dbReference>
<feature type="chain" id="PRO_0000254254" description="ATP synthase subunit beta">
    <location>
        <begin position="1"/>
        <end position="470"/>
    </location>
</feature>
<feature type="binding site" evidence="1">
    <location>
        <begin position="156"/>
        <end position="163"/>
    </location>
    <ligand>
        <name>ATP</name>
        <dbReference type="ChEBI" id="CHEBI:30616"/>
    </ligand>
</feature>
<gene>
    <name evidence="1" type="primary">atpD</name>
    <name type="ordered locus">DVU_0775</name>
</gene>
<reference key="1">
    <citation type="journal article" date="2004" name="Nat. Biotechnol.">
        <title>The genome sequence of the anaerobic, sulfate-reducing bacterium Desulfovibrio vulgaris Hildenborough.</title>
        <authorList>
            <person name="Heidelberg J.F."/>
            <person name="Seshadri R."/>
            <person name="Haveman S.A."/>
            <person name="Hemme C.L."/>
            <person name="Paulsen I.T."/>
            <person name="Kolonay J.F."/>
            <person name="Eisen J.A."/>
            <person name="Ward N.L."/>
            <person name="Methe B.A."/>
            <person name="Brinkac L.M."/>
            <person name="Daugherty S.C."/>
            <person name="DeBoy R.T."/>
            <person name="Dodson R.J."/>
            <person name="Durkin A.S."/>
            <person name="Madupu R."/>
            <person name="Nelson W.C."/>
            <person name="Sullivan S.A."/>
            <person name="Fouts D.E."/>
            <person name="Haft D.H."/>
            <person name="Selengut J."/>
            <person name="Peterson J.D."/>
            <person name="Davidsen T.M."/>
            <person name="Zafar N."/>
            <person name="Zhou L."/>
            <person name="Radune D."/>
            <person name="Dimitrov G."/>
            <person name="Hance M."/>
            <person name="Tran K."/>
            <person name="Khouri H.M."/>
            <person name="Gill J."/>
            <person name="Utterback T.R."/>
            <person name="Feldblyum T.V."/>
            <person name="Wall J.D."/>
            <person name="Voordouw G."/>
            <person name="Fraser C.M."/>
        </authorList>
    </citation>
    <scope>NUCLEOTIDE SEQUENCE [LARGE SCALE GENOMIC DNA]</scope>
    <source>
        <strain>ATCC 29579 / DSM 644 / CCUG 34227 / NCIMB 8303 / VKM B-1760 / Hildenborough</strain>
    </source>
</reference>
<evidence type="ECO:0000255" key="1">
    <source>
        <dbReference type="HAMAP-Rule" id="MF_01347"/>
    </source>
</evidence>
<protein>
    <recommendedName>
        <fullName evidence="1">ATP synthase subunit beta</fullName>
        <ecNumber evidence="1">7.1.2.2</ecNumber>
    </recommendedName>
    <alternativeName>
        <fullName evidence="1">ATP synthase F1 sector subunit beta</fullName>
    </alternativeName>
    <alternativeName>
        <fullName evidence="1">F-ATPase subunit beta</fullName>
    </alternativeName>
</protein>
<comment type="function">
    <text evidence="1">Produces ATP from ADP in the presence of a proton gradient across the membrane. The catalytic sites are hosted primarily by the beta subunits.</text>
</comment>
<comment type="catalytic activity">
    <reaction evidence="1">
        <text>ATP + H2O + 4 H(+)(in) = ADP + phosphate + 5 H(+)(out)</text>
        <dbReference type="Rhea" id="RHEA:57720"/>
        <dbReference type="ChEBI" id="CHEBI:15377"/>
        <dbReference type="ChEBI" id="CHEBI:15378"/>
        <dbReference type="ChEBI" id="CHEBI:30616"/>
        <dbReference type="ChEBI" id="CHEBI:43474"/>
        <dbReference type="ChEBI" id="CHEBI:456216"/>
        <dbReference type="EC" id="7.1.2.2"/>
    </reaction>
</comment>
<comment type="subunit">
    <text evidence="1">F-type ATPases have 2 components, CF(1) - the catalytic core - and CF(0) - the membrane proton channel. CF(1) has five subunits: alpha(3), beta(3), gamma(1), delta(1), epsilon(1). CF(0) has three main subunits: a(1), b(2) and c(9-12). The alpha and beta chains form an alternating ring which encloses part of the gamma chain. CF(1) is attached to CF(0) by a central stalk formed by the gamma and epsilon chains, while a peripheral stalk is formed by the delta and b chains.</text>
</comment>
<comment type="subcellular location">
    <subcellularLocation>
        <location evidence="1">Cell inner membrane</location>
        <topology evidence="1">Peripheral membrane protein</topology>
    </subcellularLocation>
</comment>
<comment type="similarity">
    <text evidence="1">Belongs to the ATPase alpha/beta chains family.</text>
</comment>
<keyword id="KW-0066">ATP synthesis</keyword>
<keyword id="KW-0067">ATP-binding</keyword>
<keyword id="KW-0997">Cell inner membrane</keyword>
<keyword id="KW-1003">Cell membrane</keyword>
<keyword id="KW-0139">CF(1)</keyword>
<keyword id="KW-0375">Hydrogen ion transport</keyword>
<keyword id="KW-0406">Ion transport</keyword>
<keyword id="KW-0472">Membrane</keyword>
<keyword id="KW-0547">Nucleotide-binding</keyword>
<keyword id="KW-1185">Reference proteome</keyword>
<keyword id="KW-1278">Translocase</keyword>
<keyword id="KW-0813">Transport</keyword>
<name>ATPB_NITV2</name>
<accession>Q72E04</accession>